<evidence type="ECO:0000250" key="1">
    <source>
        <dbReference type="UniProtKB" id="Q9P0P0"/>
    </source>
</evidence>
<evidence type="ECO:0000255" key="2">
    <source>
        <dbReference type="PROSITE-ProRule" id="PRU00175"/>
    </source>
</evidence>
<evidence type="ECO:0000256" key="3">
    <source>
        <dbReference type="SAM" id="MobiDB-lite"/>
    </source>
</evidence>
<evidence type="ECO:0000303" key="4">
    <source>
    </source>
</evidence>
<evidence type="ECO:0000305" key="5"/>
<evidence type="ECO:0000312" key="6">
    <source>
        <dbReference type="MGI" id="MGI:1913760"/>
    </source>
</evidence>
<sequence>MASYFDEHDCEPLNPEREARNNMLLELARRVRGAWSWAPGGRSLFNRMDFEDLGLVDWEHHLPPPAAKAVVESLPRTVISSAKADLKCPVCLLEFEAEETVIEMPCHHLFHSNCILPWLSKTNSCPLCRHELPTDDDSYEEHKKDKARRQQQQHRLENLHGAMYT</sequence>
<keyword id="KW-0025">Alternative splicing</keyword>
<keyword id="KW-0479">Metal-binding</keyword>
<keyword id="KW-0597">Phosphoprotein</keyword>
<keyword id="KW-1185">Reference proteome</keyword>
<keyword id="KW-0808">Transferase</keyword>
<keyword id="KW-0832">Ubl conjugation</keyword>
<keyword id="KW-0833">Ubl conjugation pathway</keyword>
<keyword id="KW-0862">Zinc</keyword>
<keyword id="KW-0863">Zinc-finger</keyword>
<accession>Q9CY62</accession>
<accession>Q8CEU6</accession>
<accession>Q9D2T4</accession>
<protein>
    <recommendedName>
        <fullName evidence="5">E3 ubiquitin-protein ligase RNF181</fullName>
        <ecNumber evidence="1">2.3.2.27</ecNumber>
    </recommendedName>
    <alternativeName>
        <fullName>RING finger protein 181</fullName>
    </alternativeName>
</protein>
<feature type="chain" id="PRO_0000295175" description="E3 ubiquitin-protein ligase RNF181">
    <location>
        <begin position="1"/>
        <end position="165"/>
    </location>
</feature>
<feature type="zinc finger region" description="RING-type; atypical" evidence="2">
    <location>
        <begin position="88"/>
        <end position="129"/>
    </location>
</feature>
<feature type="region of interest" description="Disordered" evidence="3">
    <location>
        <begin position="136"/>
        <end position="165"/>
    </location>
</feature>
<feature type="modified residue" description="Phosphothreonine" evidence="1">
    <location>
        <position position="165"/>
    </location>
</feature>
<feature type="splice variant" id="VSP_027006" description="In isoform 2." evidence="4">
    <location>
        <begin position="1"/>
        <end position="47"/>
    </location>
</feature>
<feature type="splice variant" id="VSP_027007" description="In isoform 3." evidence="4">
    <original>REARNNMLLELARRVRGAWSWAPGGRSLFNRMDFEDLGLVDWEHHLPPPAAKAVVESLPRTVISSAKAD</original>
    <variation>H</variation>
    <location>
        <begin position="17"/>
        <end position="85"/>
    </location>
</feature>
<comment type="function">
    <text evidence="1">E3 ubiquitin-protein ligase which accepts ubiquitin from an E2 ubiquitin-conjugating enzyme in the form of a thioester and then directly transfers the ubiquitin to targeted substrates. Catalyzes monoubiquitination of 26S proteasome subunit PSMC2/RPT1.</text>
</comment>
<comment type="catalytic activity">
    <reaction evidence="1">
        <text>S-ubiquitinyl-[E2 ubiquitin-conjugating enzyme]-L-cysteine + [acceptor protein]-L-lysine = [E2 ubiquitin-conjugating enzyme]-L-cysteine + N(6)-ubiquitinyl-[acceptor protein]-L-lysine.</text>
        <dbReference type="EC" id="2.3.2.27"/>
    </reaction>
</comment>
<comment type="pathway">
    <text evidence="1">Protein modification; protein ubiquitination.</text>
</comment>
<comment type="subunit">
    <text evidence="1">Directly interacts with ITGA2B and, as a result, with integrin ITGA2B/ITGB3. There is no evidence that integrin ITGA2B/ITGB3 is an endogenous substrate for RNF181-directed ubiquitination.</text>
</comment>
<comment type="alternative products">
    <event type="alternative splicing"/>
    <isoform>
        <id>Q9CY62-1</id>
        <name>1</name>
        <sequence type="displayed"/>
    </isoform>
    <isoform>
        <id>Q9CY62-2</id>
        <name>2</name>
        <sequence type="described" ref="VSP_027006"/>
    </isoform>
    <isoform>
        <id>Q9CY62-3</id>
        <name>3</name>
        <sequence type="described" ref="VSP_027007"/>
    </isoform>
</comment>
<comment type="PTM">
    <text evidence="1">Auto-ubiquitinated as part of the enzymatic reaction.</text>
</comment>
<comment type="similarity">
    <text evidence="5">Belongs to the RNF181 family.</text>
</comment>
<organism>
    <name type="scientific">Mus musculus</name>
    <name type="common">Mouse</name>
    <dbReference type="NCBI Taxonomy" id="10090"/>
    <lineage>
        <taxon>Eukaryota</taxon>
        <taxon>Metazoa</taxon>
        <taxon>Chordata</taxon>
        <taxon>Craniata</taxon>
        <taxon>Vertebrata</taxon>
        <taxon>Euteleostomi</taxon>
        <taxon>Mammalia</taxon>
        <taxon>Eutheria</taxon>
        <taxon>Euarchontoglires</taxon>
        <taxon>Glires</taxon>
        <taxon>Rodentia</taxon>
        <taxon>Myomorpha</taxon>
        <taxon>Muroidea</taxon>
        <taxon>Muridae</taxon>
        <taxon>Murinae</taxon>
        <taxon>Mus</taxon>
        <taxon>Mus</taxon>
    </lineage>
</organism>
<proteinExistence type="evidence at protein level"/>
<gene>
    <name evidence="6" type="primary">Rnf181</name>
</gene>
<reference key="1">
    <citation type="journal article" date="2005" name="Science">
        <title>The transcriptional landscape of the mammalian genome.</title>
        <authorList>
            <person name="Carninci P."/>
            <person name="Kasukawa T."/>
            <person name="Katayama S."/>
            <person name="Gough J."/>
            <person name="Frith M.C."/>
            <person name="Maeda N."/>
            <person name="Oyama R."/>
            <person name="Ravasi T."/>
            <person name="Lenhard B."/>
            <person name="Wells C."/>
            <person name="Kodzius R."/>
            <person name="Shimokawa K."/>
            <person name="Bajic V.B."/>
            <person name="Brenner S.E."/>
            <person name="Batalov S."/>
            <person name="Forrest A.R."/>
            <person name="Zavolan M."/>
            <person name="Davis M.J."/>
            <person name="Wilming L.G."/>
            <person name="Aidinis V."/>
            <person name="Allen J.E."/>
            <person name="Ambesi-Impiombato A."/>
            <person name="Apweiler R."/>
            <person name="Aturaliya R.N."/>
            <person name="Bailey T.L."/>
            <person name="Bansal M."/>
            <person name="Baxter L."/>
            <person name="Beisel K.W."/>
            <person name="Bersano T."/>
            <person name="Bono H."/>
            <person name="Chalk A.M."/>
            <person name="Chiu K.P."/>
            <person name="Choudhary V."/>
            <person name="Christoffels A."/>
            <person name="Clutterbuck D.R."/>
            <person name="Crowe M.L."/>
            <person name="Dalla E."/>
            <person name="Dalrymple B.P."/>
            <person name="de Bono B."/>
            <person name="Della Gatta G."/>
            <person name="di Bernardo D."/>
            <person name="Down T."/>
            <person name="Engstrom P."/>
            <person name="Fagiolini M."/>
            <person name="Faulkner G."/>
            <person name="Fletcher C.F."/>
            <person name="Fukushima T."/>
            <person name="Furuno M."/>
            <person name="Futaki S."/>
            <person name="Gariboldi M."/>
            <person name="Georgii-Hemming P."/>
            <person name="Gingeras T.R."/>
            <person name="Gojobori T."/>
            <person name="Green R.E."/>
            <person name="Gustincich S."/>
            <person name="Harbers M."/>
            <person name="Hayashi Y."/>
            <person name="Hensch T.K."/>
            <person name="Hirokawa N."/>
            <person name="Hill D."/>
            <person name="Huminiecki L."/>
            <person name="Iacono M."/>
            <person name="Ikeo K."/>
            <person name="Iwama A."/>
            <person name="Ishikawa T."/>
            <person name="Jakt M."/>
            <person name="Kanapin A."/>
            <person name="Katoh M."/>
            <person name="Kawasawa Y."/>
            <person name="Kelso J."/>
            <person name="Kitamura H."/>
            <person name="Kitano H."/>
            <person name="Kollias G."/>
            <person name="Krishnan S.P."/>
            <person name="Kruger A."/>
            <person name="Kummerfeld S.K."/>
            <person name="Kurochkin I.V."/>
            <person name="Lareau L.F."/>
            <person name="Lazarevic D."/>
            <person name="Lipovich L."/>
            <person name="Liu J."/>
            <person name="Liuni S."/>
            <person name="McWilliam S."/>
            <person name="Madan Babu M."/>
            <person name="Madera M."/>
            <person name="Marchionni L."/>
            <person name="Matsuda H."/>
            <person name="Matsuzawa S."/>
            <person name="Miki H."/>
            <person name="Mignone F."/>
            <person name="Miyake S."/>
            <person name="Morris K."/>
            <person name="Mottagui-Tabar S."/>
            <person name="Mulder N."/>
            <person name="Nakano N."/>
            <person name="Nakauchi H."/>
            <person name="Ng P."/>
            <person name="Nilsson R."/>
            <person name="Nishiguchi S."/>
            <person name="Nishikawa S."/>
            <person name="Nori F."/>
            <person name="Ohara O."/>
            <person name="Okazaki Y."/>
            <person name="Orlando V."/>
            <person name="Pang K.C."/>
            <person name="Pavan W.J."/>
            <person name="Pavesi G."/>
            <person name="Pesole G."/>
            <person name="Petrovsky N."/>
            <person name="Piazza S."/>
            <person name="Reed J."/>
            <person name="Reid J.F."/>
            <person name="Ring B.Z."/>
            <person name="Ringwald M."/>
            <person name="Rost B."/>
            <person name="Ruan Y."/>
            <person name="Salzberg S.L."/>
            <person name="Sandelin A."/>
            <person name="Schneider C."/>
            <person name="Schoenbach C."/>
            <person name="Sekiguchi K."/>
            <person name="Semple C.A."/>
            <person name="Seno S."/>
            <person name="Sessa L."/>
            <person name="Sheng Y."/>
            <person name="Shibata Y."/>
            <person name="Shimada H."/>
            <person name="Shimada K."/>
            <person name="Silva D."/>
            <person name="Sinclair B."/>
            <person name="Sperling S."/>
            <person name="Stupka E."/>
            <person name="Sugiura K."/>
            <person name="Sultana R."/>
            <person name="Takenaka Y."/>
            <person name="Taki K."/>
            <person name="Tammoja K."/>
            <person name="Tan S.L."/>
            <person name="Tang S."/>
            <person name="Taylor M.S."/>
            <person name="Tegner J."/>
            <person name="Teichmann S.A."/>
            <person name="Ueda H.R."/>
            <person name="van Nimwegen E."/>
            <person name="Verardo R."/>
            <person name="Wei C.L."/>
            <person name="Yagi K."/>
            <person name="Yamanishi H."/>
            <person name="Zabarovsky E."/>
            <person name="Zhu S."/>
            <person name="Zimmer A."/>
            <person name="Hide W."/>
            <person name="Bult C."/>
            <person name="Grimmond S.M."/>
            <person name="Teasdale R.D."/>
            <person name="Liu E.T."/>
            <person name="Brusic V."/>
            <person name="Quackenbush J."/>
            <person name="Wahlestedt C."/>
            <person name="Mattick J.S."/>
            <person name="Hume D.A."/>
            <person name="Kai C."/>
            <person name="Sasaki D."/>
            <person name="Tomaru Y."/>
            <person name="Fukuda S."/>
            <person name="Kanamori-Katayama M."/>
            <person name="Suzuki M."/>
            <person name="Aoki J."/>
            <person name="Arakawa T."/>
            <person name="Iida J."/>
            <person name="Imamura K."/>
            <person name="Itoh M."/>
            <person name="Kato T."/>
            <person name="Kawaji H."/>
            <person name="Kawagashira N."/>
            <person name="Kawashima T."/>
            <person name="Kojima M."/>
            <person name="Kondo S."/>
            <person name="Konno H."/>
            <person name="Nakano K."/>
            <person name="Ninomiya N."/>
            <person name="Nishio T."/>
            <person name="Okada M."/>
            <person name="Plessy C."/>
            <person name="Shibata K."/>
            <person name="Shiraki T."/>
            <person name="Suzuki S."/>
            <person name="Tagami M."/>
            <person name="Waki K."/>
            <person name="Watahiki A."/>
            <person name="Okamura-Oho Y."/>
            <person name="Suzuki H."/>
            <person name="Kawai J."/>
            <person name="Hayashizaki Y."/>
        </authorList>
    </citation>
    <scope>NUCLEOTIDE SEQUENCE [LARGE SCALE MRNA] (ISOFORMS 1; 2 AND 3)</scope>
    <source>
        <strain>C57BL/6J</strain>
        <strain>DBA/2J</strain>
        <tissue>Amnion</tissue>
        <tissue>Head</tissue>
        <tissue>Liver</tissue>
        <tissue>Placenta</tissue>
        <tissue>Testis</tissue>
    </source>
</reference>
<reference key="2">
    <citation type="journal article" date="2004" name="Genome Res.">
        <title>The status, quality, and expansion of the NIH full-length cDNA project: the Mammalian Gene Collection (MGC).</title>
        <authorList>
            <consortium name="The MGC Project Team"/>
        </authorList>
    </citation>
    <scope>NUCLEOTIDE SEQUENCE [LARGE SCALE MRNA] (ISOFORM 1)</scope>
    <source>
        <strain>FVB/N</strain>
        <strain>FVB/N-3</strain>
        <tissue>Mammary tumor</tissue>
    </source>
</reference>
<reference key="3">
    <citation type="journal article" date="2010" name="Cell">
        <title>A tissue-specific atlas of mouse protein phosphorylation and expression.</title>
        <authorList>
            <person name="Huttlin E.L."/>
            <person name="Jedrychowski M.P."/>
            <person name="Elias J.E."/>
            <person name="Goswami T."/>
            <person name="Rad R."/>
            <person name="Beausoleil S.A."/>
            <person name="Villen J."/>
            <person name="Haas W."/>
            <person name="Sowa M.E."/>
            <person name="Gygi S.P."/>
        </authorList>
    </citation>
    <scope>IDENTIFICATION BY MASS SPECTROMETRY [LARGE SCALE ANALYSIS]</scope>
    <source>
        <tissue>Brain</tissue>
        <tissue>Kidney</tissue>
        <tissue>Lung</tissue>
        <tissue>Pancreas</tissue>
        <tissue>Spleen</tissue>
        <tissue>Testis</tissue>
    </source>
</reference>
<name>RN181_MOUSE</name>
<dbReference type="EC" id="2.3.2.27" evidence="1"/>
<dbReference type="EMBL" id="AK010854">
    <property type="protein sequence ID" value="BAB27224.1"/>
    <property type="molecule type" value="mRNA"/>
</dbReference>
<dbReference type="EMBL" id="AK014094">
    <property type="protein sequence ID" value="BAC25424.1"/>
    <property type="molecule type" value="mRNA"/>
</dbReference>
<dbReference type="EMBL" id="AK159788">
    <property type="protein sequence ID" value="BAE35371.1"/>
    <property type="molecule type" value="mRNA"/>
</dbReference>
<dbReference type="EMBL" id="AK166904">
    <property type="protein sequence ID" value="BAE39106.1"/>
    <property type="molecule type" value="mRNA"/>
</dbReference>
<dbReference type="EMBL" id="AK166995">
    <property type="protein sequence ID" value="BAE39174.1"/>
    <property type="molecule type" value="mRNA"/>
</dbReference>
<dbReference type="EMBL" id="AK167396">
    <property type="protein sequence ID" value="BAE39485.1"/>
    <property type="molecule type" value="mRNA"/>
</dbReference>
<dbReference type="EMBL" id="AK167633">
    <property type="protein sequence ID" value="BAE39684.1"/>
    <property type="molecule type" value="mRNA"/>
</dbReference>
<dbReference type="EMBL" id="AK167935">
    <property type="protein sequence ID" value="BAE39939.1"/>
    <property type="molecule type" value="mRNA"/>
</dbReference>
<dbReference type="EMBL" id="AK168670">
    <property type="protein sequence ID" value="BAE40520.1"/>
    <property type="molecule type" value="mRNA"/>
</dbReference>
<dbReference type="EMBL" id="AK018849">
    <property type="protein sequence ID" value="BAB31462.1"/>
    <property type="molecule type" value="mRNA"/>
</dbReference>
<dbReference type="EMBL" id="BC005559">
    <property type="protein sequence ID" value="AAH05559.1"/>
    <property type="molecule type" value="mRNA"/>
</dbReference>
<dbReference type="EMBL" id="BC083119">
    <property type="protein sequence ID" value="AAH83119.1"/>
    <property type="molecule type" value="mRNA"/>
</dbReference>
<dbReference type="CCDS" id="CCDS20240.1">
    <molecule id="Q9CY62-1"/>
</dbReference>
<dbReference type="CCDS" id="CCDS85064.1">
    <molecule id="Q9CY62-2"/>
</dbReference>
<dbReference type="CCDS" id="CCDS90058.1">
    <molecule id="Q9CY62-3"/>
</dbReference>
<dbReference type="RefSeq" id="NP_001318096.1">
    <molecule id="Q9CY62-2"/>
    <property type="nucleotide sequence ID" value="NM_001331167.1"/>
</dbReference>
<dbReference type="RefSeq" id="NP_001318097.1">
    <molecule id="Q9CY62-3"/>
    <property type="nucleotide sequence ID" value="NM_001331168.1"/>
</dbReference>
<dbReference type="RefSeq" id="NP_001318098.1">
    <molecule id="Q9CY62-2"/>
    <property type="nucleotide sequence ID" value="NM_001331169.1"/>
</dbReference>
<dbReference type="RefSeq" id="NP_079883.3">
    <molecule id="Q9CY62-1"/>
    <property type="nucleotide sequence ID" value="NM_025607.4"/>
</dbReference>
<dbReference type="RefSeq" id="XP_030111400.1">
    <molecule id="Q9CY62-1"/>
    <property type="nucleotide sequence ID" value="XM_030255540.1"/>
</dbReference>
<dbReference type="RefSeq" id="XP_030111401.1">
    <molecule id="Q9CY62-1"/>
    <property type="nucleotide sequence ID" value="XM_030255541.2"/>
</dbReference>
<dbReference type="RefSeq" id="XP_030111402.1">
    <molecule id="Q9CY62-2"/>
    <property type="nucleotide sequence ID" value="XM_030255542.1"/>
</dbReference>
<dbReference type="RefSeq" id="XP_030111403.1">
    <molecule id="Q9CY62-2"/>
    <property type="nucleotide sequence ID" value="XM_030255543.1"/>
</dbReference>
<dbReference type="SMR" id="Q9CY62"/>
<dbReference type="BioGRID" id="211526">
    <property type="interactions" value="28"/>
</dbReference>
<dbReference type="FunCoup" id="Q9CY62">
    <property type="interactions" value="914"/>
</dbReference>
<dbReference type="STRING" id="10090.ENSMUSP00000066128"/>
<dbReference type="GlyGen" id="Q9CY62">
    <property type="glycosylation" value="1 site, 1 O-linked glycan (1 site)"/>
</dbReference>
<dbReference type="iPTMnet" id="Q9CY62"/>
<dbReference type="PhosphoSitePlus" id="Q9CY62"/>
<dbReference type="SwissPalm" id="Q9CY62"/>
<dbReference type="PaxDb" id="10090-ENSMUSP00000066128"/>
<dbReference type="PeptideAtlas" id="Q9CY62"/>
<dbReference type="ProteomicsDB" id="299841">
    <molecule id="Q9CY62-1"/>
</dbReference>
<dbReference type="ProteomicsDB" id="299842">
    <molecule id="Q9CY62-2"/>
</dbReference>
<dbReference type="ProteomicsDB" id="299843">
    <molecule id="Q9CY62-3"/>
</dbReference>
<dbReference type="Pumba" id="Q9CY62"/>
<dbReference type="Antibodypedia" id="31897">
    <property type="antibodies" value="102 antibodies from 23 providers"/>
</dbReference>
<dbReference type="Ensembl" id="ENSMUST00000069580.12">
    <molecule id="Q9CY62-1"/>
    <property type="protein sequence ID" value="ENSMUSP00000066128.6"/>
    <property type="gene ID" value="ENSMUSG00000055850.13"/>
</dbReference>
<dbReference type="Ensembl" id="ENSMUST00000069595.13">
    <molecule id="Q9CY62-3"/>
    <property type="protein sequence ID" value="ENSMUSP00000070370.7"/>
    <property type="gene ID" value="ENSMUSG00000055850.13"/>
</dbReference>
<dbReference type="Ensembl" id="ENSMUST00000154098.3">
    <molecule id="Q9CY62-2"/>
    <property type="protein sequence ID" value="ENSMUSP00000138327.2"/>
    <property type="gene ID" value="ENSMUSG00000055850.13"/>
</dbReference>
<dbReference type="GeneID" id="66510"/>
<dbReference type="KEGG" id="mmu:66510"/>
<dbReference type="UCSC" id="uc009cii.1">
    <molecule id="Q9CY62-1"/>
    <property type="organism name" value="mouse"/>
</dbReference>
<dbReference type="UCSC" id="uc009cij.1">
    <molecule id="Q9CY62-3"/>
    <property type="organism name" value="mouse"/>
</dbReference>
<dbReference type="AGR" id="MGI:1913760"/>
<dbReference type="CTD" id="51255"/>
<dbReference type="MGI" id="MGI:1913760">
    <property type="gene designation" value="Rnf181"/>
</dbReference>
<dbReference type="VEuPathDB" id="HostDB:ENSMUSG00000055850"/>
<dbReference type="eggNOG" id="KOG0800">
    <property type="taxonomic scope" value="Eukaryota"/>
</dbReference>
<dbReference type="GeneTree" id="ENSGT00940000165973"/>
<dbReference type="HOGENOM" id="CLU_2173682_0_0_1"/>
<dbReference type="InParanoid" id="Q9CY62"/>
<dbReference type="OMA" id="EHLHGAM"/>
<dbReference type="OrthoDB" id="21204at2759"/>
<dbReference type="PhylomeDB" id="Q9CY62"/>
<dbReference type="Reactome" id="R-MMU-8866654">
    <property type="pathway name" value="E3 ubiquitin ligases ubiquitinate target proteins"/>
</dbReference>
<dbReference type="UniPathway" id="UPA00143"/>
<dbReference type="BioGRID-ORCS" id="66510">
    <property type="hits" value="3 hits in 79 CRISPR screens"/>
</dbReference>
<dbReference type="ChiTaRS" id="Rnf181">
    <property type="organism name" value="mouse"/>
</dbReference>
<dbReference type="PRO" id="PR:Q9CY62"/>
<dbReference type="Proteomes" id="UP000000589">
    <property type="component" value="Chromosome 6"/>
</dbReference>
<dbReference type="RNAct" id="Q9CY62">
    <property type="molecule type" value="protein"/>
</dbReference>
<dbReference type="Bgee" id="ENSMUSG00000055850">
    <property type="expression patterns" value="Expressed in proximal tubule and 77 other cell types or tissues"/>
</dbReference>
<dbReference type="ExpressionAtlas" id="Q9CY62">
    <property type="expression patterns" value="baseline and differential"/>
</dbReference>
<dbReference type="GO" id="GO:0061630">
    <property type="term" value="F:ubiquitin protein ligase activity"/>
    <property type="evidence" value="ECO:0000250"/>
    <property type="project" value="UniProtKB"/>
</dbReference>
<dbReference type="GO" id="GO:0008270">
    <property type="term" value="F:zinc ion binding"/>
    <property type="evidence" value="ECO:0007669"/>
    <property type="project" value="UniProtKB-KW"/>
</dbReference>
<dbReference type="GO" id="GO:0016567">
    <property type="term" value="P:protein ubiquitination"/>
    <property type="evidence" value="ECO:0007669"/>
    <property type="project" value="UniProtKB-UniPathway"/>
</dbReference>
<dbReference type="CDD" id="cd16669">
    <property type="entry name" value="RING-H2_RNF181"/>
    <property type="match status" value="1"/>
</dbReference>
<dbReference type="FunFam" id="3.30.40.10:FF:000127">
    <property type="entry name" value="E3 ubiquitin-protein ligase RNF181"/>
    <property type="match status" value="1"/>
</dbReference>
<dbReference type="Gene3D" id="3.30.40.10">
    <property type="entry name" value="Zinc/RING finger domain, C3HC4 (zinc finger)"/>
    <property type="match status" value="1"/>
</dbReference>
<dbReference type="InterPro" id="IPR001841">
    <property type="entry name" value="Znf_RING"/>
</dbReference>
<dbReference type="InterPro" id="IPR013083">
    <property type="entry name" value="Znf_RING/FYVE/PHD"/>
</dbReference>
<dbReference type="PANTHER" id="PTHR15710">
    <property type="entry name" value="E3 UBIQUITIN-PROTEIN LIGASE PRAJA"/>
    <property type="match status" value="1"/>
</dbReference>
<dbReference type="PANTHER" id="PTHR15710:SF160">
    <property type="entry name" value="E3 UBIQUITIN-PROTEIN LIGASE RNF181"/>
    <property type="match status" value="1"/>
</dbReference>
<dbReference type="Pfam" id="PF13639">
    <property type="entry name" value="zf-RING_2"/>
    <property type="match status" value="1"/>
</dbReference>
<dbReference type="SMART" id="SM00184">
    <property type="entry name" value="RING"/>
    <property type="match status" value="1"/>
</dbReference>
<dbReference type="SUPFAM" id="SSF57850">
    <property type="entry name" value="RING/U-box"/>
    <property type="match status" value="1"/>
</dbReference>
<dbReference type="PROSITE" id="PS50089">
    <property type="entry name" value="ZF_RING_2"/>
    <property type="match status" value="1"/>
</dbReference>